<sequence length="682" mass="73603">MTSPASGVPEPADPKARLAELVERLAAADAAYYRDDAPIMDDAAYDALRREAESLRAAHPDLAAALDQVGAAPSGAFGKVRHRLPMLSLDNVFEPADFVEFCASIRRFLGLGAAPLAFVAEPKIDGLSISLTYENRRFVRGATRGDGTEGEDVTENLRTLRELPATLPDDAPDFIEIRGEVYMTKTDFITLNQGQARQFANPRNAAAGSLRQLDPAVTASRRLSLFAYARGAASQAVGETHWDYLAILRRWGFPVNPLAERVSEAGAEPFQRSIGERRAGLDYDIDGVVYKIDDLALQERLGFAGRAPRWAVAWKFPAERALTTLLGIDIQVGRTGALTPRARLDPVNVGGVLVSHATLHNEDEIARKDVRIGDTVELQRAGDVIPQILRALPERRPADSVPFVFPDHCPVCGALAIRPAGEVVRRCTGGLSCPAQVVERLIHFCSRLAFDIEGMGEKTVQEFHGLGWLESPADIFTLRDREAAIAALEGWGEVSARKLIAAIDARRRISLARFIYALGIRRIGEQNAKLLARHYSSYAVWRRQMEEAGVIGSDARLELGSISGIGPSIAEELAGFFAEPHNRDLLDRLVPMLTIEDEVAAAGGALAGKTIVFTGTLESLTRPEAKARAEALGARVTESVSKKTDFVVVGADAGSKAAKAASLGVTVLSEAEFRSLAGLPPG</sequence>
<keyword id="KW-0227">DNA damage</keyword>
<keyword id="KW-0234">DNA repair</keyword>
<keyword id="KW-0235">DNA replication</keyword>
<keyword id="KW-0436">Ligase</keyword>
<keyword id="KW-0460">Magnesium</keyword>
<keyword id="KW-0464">Manganese</keyword>
<keyword id="KW-0479">Metal-binding</keyword>
<keyword id="KW-0520">NAD</keyword>
<keyword id="KW-1185">Reference proteome</keyword>
<keyword id="KW-0862">Zinc</keyword>
<feature type="chain" id="PRO_0000313528" description="DNA ligase">
    <location>
        <begin position="1"/>
        <end position="682"/>
    </location>
</feature>
<feature type="domain" description="BRCT" evidence="1">
    <location>
        <begin position="601"/>
        <end position="682"/>
    </location>
</feature>
<feature type="active site" description="N6-AMP-lysine intermediate" evidence="1">
    <location>
        <position position="123"/>
    </location>
</feature>
<feature type="binding site" evidence="1">
    <location>
        <begin position="42"/>
        <end position="46"/>
    </location>
    <ligand>
        <name>NAD(+)</name>
        <dbReference type="ChEBI" id="CHEBI:57540"/>
    </ligand>
</feature>
<feature type="binding site" evidence="1">
    <location>
        <begin position="88"/>
        <end position="89"/>
    </location>
    <ligand>
        <name>NAD(+)</name>
        <dbReference type="ChEBI" id="CHEBI:57540"/>
    </ligand>
</feature>
<feature type="binding site" evidence="1">
    <location>
        <position position="121"/>
    </location>
    <ligand>
        <name>NAD(+)</name>
        <dbReference type="ChEBI" id="CHEBI:57540"/>
    </ligand>
</feature>
<feature type="binding site" evidence="1">
    <location>
        <position position="144"/>
    </location>
    <ligand>
        <name>NAD(+)</name>
        <dbReference type="ChEBI" id="CHEBI:57540"/>
    </ligand>
</feature>
<feature type="binding site" evidence="1">
    <location>
        <position position="180"/>
    </location>
    <ligand>
        <name>NAD(+)</name>
        <dbReference type="ChEBI" id="CHEBI:57540"/>
    </ligand>
</feature>
<feature type="binding site" evidence="1">
    <location>
        <position position="291"/>
    </location>
    <ligand>
        <name>NAD(+)</name>
        <dbReference type="ChEBI" id="CHEBI:57540"/>
    </ligand>
</feature>
<feature type="binding site" evidence="1">
    <location>
        <position position="315"/>
    </location>
    <ligand>
        <name>NAD(+)</name>
        <dbReference type="ChEBI" id="CHEBI:57540"/>
    </ligand>
</feature>
<feature type="binding site" evidence="1">
    <location>
        <position position="409"/>
    </location>
    <ligand>
        <name>Zn(2+)</name>
        <dbReference type="ChEBI" id="CHEBI:29105"/>
    </ligand>
</feature>
<feature type="binding site" evidence="1">
    <location>
        <position position="412"/>
    </location>
    <ligand>
        <name>Zn(2+)</name>
        <dbReference type="ChEBI" id="CHEBI:29105"/>
    </ligand>
</feature>
<feature type="binding site" evidence="1">
    <location>
        <position position="427"/>
    </location>
    <ligand>
        <name>Zn(2+)</name>
        <dbReference type="ChEBI" id="CHEBI:29105"/>
    </ligand>
</feature>
<feature type="binding site" evidence="1">
    <location>
        <position position="433"/>
    </location>
    <ligand>
        <name>Zn(2+)</name>
        <dbReference type="ChEBI" id="CHEBI:29105"/>
    </ligand>
</feature>
<organism>
    <name type="scientific">Acidiphilium cryptum (strain JF-5)</name>
    <dbReference type="NCBI Taxonomy" id="349163"/>
    <lineage>
        <taxon>Bacteria</taxon>
        <taxon>Pseudomonadati</taxon>
        <taxon>Pseudomonadota</taxon>
        <taxon>Alphaproteobacteria</taxon>
        <taxon>Acetobacterales</taxon>
        <taxon>Acidocellaceae</taxon>
        <taxon>Acidiphilium</taxon>
    </lineage>
</organism>
<dbReference type="EC" id="6.5.1.2" evidence="1"/>
<dbReference type="EMBL" id="CP000697">
    <property type="protein sequence ID" value="ABQ29977.1"/>
    <property type="molecule type" value="Genomic_DNA"/>
</dbReference>
<dbReference type="RefSeq" id="WP_011941753.1">
    <property type="nucleotide sequence ID" value="NC_009484.1"/>
</dbReference>
<dbReference type="SMR" id="A5FWJ5"/>
<dbReference type="STRING" id="349163.Acry_0757"/>
<dbReference type="KEGG" id="acr:Acry_0757"/>
<dbReference type="eggNOG" id="COG0272">
    <property type="taxonomic scope" value="Bacteria"/>
</dbReference>
<dbReference type="HOGENOM" id="CLU_007764_2_1_5"/>
<dbReference type="Proteomes" id="UP000000245">
    <property type="component" value="Chromosome"/>
</dbReference>
<dbReference type="GO" id="GO:0005829">
    <property type="term" value="C:cytosol"/>
    <property type="evidence" value="ECO:0007669"/>
    <property type="project" value="TreeGrafter"/>
</dbReference>
<dbReference type="GO" id="GO:0003911">
    <property type="term" value="F:DNA ligase (NAD+) activity"/>
    <property type="evidence" value="ECO:0007669"/>
    <property type="project" value="UniProtKB-UniRule"/>
</dbReference>
<dbReference type="GO" id="GO:0046872">
    <property type="term" value="F:metal ion binding"/>
    <property type="evidence" value="ECO:0007669"/>
    <property type="project" value="UniProtKB-KW"/>
</dbReference>
<dbReference type="GO" id="GO:0006281">
    <property type="term" value="P:DNA repair"/>
    <property type="evidence" value="ECO:0007669"/>
    <property type="project" value="UniProtKB-KW"/>
</dbReference>
<dbReference type="GO" id="GO:0006260">
    <property type="term" value="P:DNA replication"/>
    <property type="evidence" value="ECO:0007669"/>
    <property type="project" value="UniProtKB-KW"/>
</dbReference>
<dbReference type="CDD" id="cd17748">
    <property type="entry name" value="BRCT_DNA_ligase_like"/>
    <property type="match status" value="1"/>
</dbReference>
<dbReference type="CDD" id="cd00114">
    <property type="entry name" value="LIGANc"/>
    <property type="match status" value="1"/>
</dbReference>
<dbReference type="FunFam" id="2.40.50.140:FF:000012">
    <property type="entry name" value="DNA ligase"/>
    <property type="match status" value="1"/>
</dbReference>
<dbReference type="Gene3D" id="6.20.10.30">
    <property type="match status" value="1"/>
</dbReference>
<dbReference type="Gene3D" id="1.10.150.20">
    <property type="entry name" value="5' to 3' exonuclease, C-terminal subdomain"/>
    <property type="match status" value="2"/>
</dbReference>
<dbReference type="Gene3D" id="3.40.50.10190">
    <property type="entry name" value="BRCT domain"/>
    <property type="match status" value="1"/>
</dbReference>
<dbReference type="Gene3D" id="3.30.470.30">
    <property type="entry name" value="DNA ligase/mRNA capping enzyme"/>
    <property type="match status" value="1"/>
</dbReference>
<dbReference type="Gene3D" id="1.10.287.610">
    <property type="entry name" value="Helix hairpin bin"/>
    <property type="match status" value="1"/>
</dbReference>
<dbReference type="Gene3D" id="2.40.50.140">
    <property type="entry name" value="Nucleic acid-binding proteins"/>
    <property type="match status" value="1"/>
</dbReference>
<dbReference type="HAMAP" id="MF_01588">
    <property type="entry name" value="DNA_ligase_A"/>
    <property type="match status" value="1"/>
</dbReference>
<dbReference type="InterPro" id="IPR001357">
    <property type="entry name" value="BRCT_dom"/>
</dbReference>
<dbReference type="InterPro" id="IPR036420">
    <property type="entry name" value="BRCT_dom_sf"/>
</dbReference>
<dbReference type="InterPro" id="IPR041663">
    <property type="entry name" value="DisA/LigA_HHH"/>
</dbReference>
<dbReference type="InterPro" id="IPR001679">
    <property type="entry name" value="DNA_ligase"/>
</dbReference>
<dbReference type="InterPro" id="IPR018239">
    <property type="entry name" value="DNA_ligase_AS"/>
</dbReference>
<dbReference type="InterPro" id="IPR013839">
    <property type="entry name" value="DNAligase_adenylation"/>
</dbReference>
<dbReference type="InterPro" id="IPR013840">
    <property type="entry name" value="DNAligase_N"/>
</dbReference>
<dbReference type="InterPro" id="IPR012340">
    <property type="entry name" value="NA-bd_OB-fold"/>
</dbReference>
<dbReference type="InterPro" id="IPR004150">
    <property type="entry name" value="NAD_DNA_ligase_OB"/>
</dbReference>
<dbReference type="InterPro" id="IPR010994">
    <property type="entry name" value="RuvA_2-like"/>
</dbReference>
<dbReference type="InterPro" id="IPR004149">
    <property type="entry name" value="Znf_DNAligase_C4"/>
</dbReference>
<dbReference type="NCBIfam" id="TIGR00575">
    <property type="entry name" value="dnlj"/>
    <property type="match status" value="1"/>
</dbReference>
<dbReference type="NCBIfam" id="NF005932">
    <property type="entry name" value="PRK07956.1"/>
    <property type="match status" value="1"/>
</dbReference>
<dbReference type="PANTHER" id="PTHR23389">
    <property type="entry name" value="CHROMOSOME TRANSMISSION FIDELITY FACTOR 18"/>
    <property type="match status" value="1"/>
</dbReference>
<dbReference type="PANTHER" id="PTHR23389:SF9">
    <property type="entry name" value="DNA LIGASE"/>
    <property type="match status" value="1"/>
</dbReference>
<dbReference type="Pfam" id="PF00533">
    <property type="entry name" value="BRCT"/>
    <property type="match status" value="1"/>
</dbReference>
<dbReference type="Pfam" id="PF01653">
    <property type="entry name" value="DNA_ligase_aden"/>
    <property type="match status" value="1"/>
</dbReference>
<dbReference type="Pfam" id="PF03120">
    <property type="entry name" value="DNA_ligase_OB"/>
    <property type="match status" value="1"/>
</dbReference>
<dbReference type="Pfam" id="PF03119">
    <property type="entry name" value="DNA_ligase_ZBD"/>
    <property type="match status" value="1"/>
</dbReference>
<dbReference type="Pfam" id="PF12826">
    <property type="entry name" value="HHH_2"/>
    <property type="match status" value="1"/>
</dbReference>
<dbReference type="PIRSF" id="PIRSF001604">
    <property type="entry name" value="LigA"/>
    <property type="match status" value="1"/>
</dbReference>
<dbReference type="SMART" id="SM00292">
    <property type="entry name" value="BRCT"/>
    <property type="match status" value="1"/>
</dbReference>
<dbReference type="SMART" id="SM00532">
    <property type="entry name" value="LIGANc"/>
    <property type="match status" value="1"/>
</dbReference>
<dbReference type="SUPFAM" id="SSF52113">
    <property type="entry name" value="BRCT domain"/>
    <property type="match status" value="1"/>
</dbReference>
<dbReference type="SUPFAM" id="SSF56091">
    <property type="entry name" value="DNA ligase/mRNA capping enzyme, catalytic domain"/>
    <property type="match status" value="1"/>
</dbReference>
<dbReference type="SUPFAM" id="SSF50249">
    <property type="entry name" value="Nucleic acid-binding proteins"/>
    <property type="match status" value="1"/>
</dbReference>
<dbReference type="SUPFAM" id="SSF47781">
    <property type="entry name" value="RuvA domain 2-like"/>
    <property type="match status" value="1"/>
</dbReference>
<dbReference type="PROSITE" id="PS50172">
    <property type="entry name" value="BRCT"/>
    <property type="match status" value="1"/>
</dbReference>
<dbReference type="PROSITE" id="PS01055">
    <property type="entry name" value="DNA_LIGASE_N1"/>
    <property type="match status" value="1"/>
</dbReference>
<reference key="1">
    <citation type="submission" date="2007-05" db="EMBL/GenBank/DDBJ databases">
        <title>Complete sequence of chromosome of Acidiphilium cryptum JF-5.</title>
        <authorList>
            <consortium name="US DOE Joint Genome Institute"/>
            <person name="Copeland A."/>
            <person name="Lucas S."/>
            <person name="Lapidus A."/>
            <person name="Barry K."/>
            <person name="Detter J.C."/>
            <person name="Glavina del Rio T."/>
            <person name="Hammon N."/>
            <person name="Israni S."/>
            <person name="Dalin E."/>
            <person name="Tice H."/>
            <person name="Pitluck S."/>
            <person name="Sims D."/>
            <person name="Brettin T."/>
            <person name="Bruce D."/>
            <person name="Han C."/>
            <person name="Schmutz J."/>
            <person name="Larimer F."/>
            <person name="Land M."/>
            <person name="Hauser L."/>
            <person name="Kyrpides N."/>
            <person name="Kim E."/>
            <person name="Magnuson T."/>
            <person name="Richardson P."/>
        </authorList>
    </citation>
    <scope>NUCLEOTIDE SEQUENCE [LARGE SCALE GENOMIC DNA]</scope>
    <source>
        <strain>JF-5</strain>
    </source>
</reference>
<proteinExistence type="inferred from homology"/>
<name>DNLJ_ACICJ</name>
<accession>A5FWJ5</accession>
<evidence type="ECO:0000255" key="1">
    <source>
        <dbReference type="HAMAP-Rule" id="MF_01588"/>
    </source>
</evidence>
<gene>
    <name evidence="1" type="primary">ligA</name>
    <name type="ordered locus">Acry_0757</name>
</gene>
<protein>
    <recommendedName>
        <fullName evidence="1">DNA ligase</fullName>
        <ecNumber evidence="1">6.5.1.2</ecNumber>
    </recommendedName>
    <alternativeName>
        <fullName evidence="1">Polydeoxyribonucleotide synthase [NAD(+)]</fullName>
    </alternativeName>
</protein>
<comment type="function">
    <text evidence="1">DNA ligase that catalyzes the formation of phosphodiester linkages between 5'-phosphoryl and 3'-hydroxyl groups in double-stranded DNA using NAD as a coenzyme and as the energy source for the reaction. It is essential for DNA replication and repair of damaged DNA.</text>
</comment>
<comment type="catalytic activity">
    <reaction evidence="1">
        <text>NAD(+) + (deoxyribonucleotide)n-3'-hydroxyl + 5'-phospho-(deoxyribonucleotide)m = (deoxyribonucleotide)n+m + AMP + beta-nicotinamide D-nucleotide.</text>
        <dbReference type="EC" id="6.5.1.2"/>
    </reaction>
</comment>
<comment type="cofactor">
    <cofactor evidence="1">
        <name>Mg(2+)</name>
        <dbReference type="ChEBI" id="CHEBI:18420"/>
    </cofactor>
    <cofactor evidence="1">
        <name>Mn(2+)</name>
        <dbReference type="ChEBI" id="CHEBI:29035"/>
    </cofactor>
</comment>
<comment type="similarity">
    <text evidence="1">Belongs to the NAD-dependent DNA ligase family. LigA subfamily.</text>
</comment>